<reference key="1">
    <citation type="journal article" date="2011" name="J. Bacteriol.">
        <title>Comparative genomics of 28 Salmonella enterica isolates: evidence for CRISPR-mediated adaptive sublineage evolution.</title>
        <authorList>
            <person name="Fricke W.F."/>
            <person name="Mammel M.K."/>
            <person name="McDermott P.F."/>
            <person name="Tartera C."/>
            <person name="White D.G."/>
            <person name="Leclerc J.E."/>
            <person name="Ravel J."/>
            <person name="Cebula T.A."/>
        </authorList>
    </citation>
    <scope>NUCLEOTIDE SEQUENCE [LARGE SCALE GENOMIC DNA]</scope>
    <source>
        <strain>CT_02021853</strain>
    </source>
</reference>
<comment type="function">
    <text evidence="1">Negatively regulates the transcription of the flagellar master operon flhDC by binding to the upstream region of the operon.</text>
</comment>
<comment type="similarity">
    <text evidence="2">Belongs to the LysR transcriptional regulatory family.</text>
</comment>
<dbReference type="EMBL" id="CP001144">
    <property type="protein sequence ID" value="ACH73640.1"/>
    <property type="molecule type" value="Genomic_DNA"/>
</dbReference>
<dbReference type="SMR" id="B5FN59"/>
<dbReference type="KEGG" id="sed:SeD_A4288"/>
<dbReference type="HOGENOM" id="CLU_039613_8_2_6"/>
<dbReference type="Proteomes" id="UP000008322">
    <property type="component" value="Chromosome"/>
</dbReference>
<dbReference type="GO" id="GO:0003677">
    <property type="term" value="F:DNA binding"/>
    <property type="evidence" value="ECO:0007669"/>
    <property type="project" value="UniProtKB-KW"/>
</dbReference>
<dbReference type="GO" id="GO:0003700">
    <property type="term" value="F:DNA-binding transcription factor activity"/>
    <property type="evidence" value="ECO:0007669"/>
    <property type="project" value="UniProtKB-UniRule"/>
</dbReference>
<dbReference type="GO" id="GO:0045892">
    <property type="term" value="P:negative regulation of DNA-templated transcription"/>
    <property type="evidence" value="ECO:0007669"/>
    <property type="project" value="UniProtKB-UniRule"/>
</dbReference>
<dbReference type="FunFam" id="1.10.10.10:FF:000001">
    <property type="entry name" value="LysR family transcriptional regulator"/>
    <property type="match status" value="1"/>
</dbReference>
<dbReference type="Gene3D" id="1.10.10.10">
    <property type="entry name" value="Winged helix-like DNA-binding domain superfamily/Winged helix DNA-binding domain"/>
    <property type="match status" value="1"/>
</dbReference>
<dbReference type="HAMAP" id="MF_01233">
    <property type="entry name" value="HTH_type_HdfR"/>
    <property type="match status" value="1"/>
</dbReference>
<dbReference type="InterPro" id="IPR050176">
    <property type="entry name" value="LTTR"/>
</dbReference>
<dbReference type="InterPro" id="IPR005119">
    <property type="entry name" value="LysR_subst-bd"/>
</dbReference>
<dbReference type="InterPro" id="IPR020890">
    <property type="entry name" value="Tscrpt_reg_HTH_HdfR"/>
</dbReference>
<dbReference type="InterPro" id="IPR000847">
    <property type="entry name" value="Tscrpt_reg_HTH_LysR"/>
</dbReference>
<dbReference type="InterPro" id="IPR036388">
    <property type="entry name" value="WH-like_DNA-bd_sf"/>
</dbReference>
<dbReference type="InterPro" id="IPR036390">
    <property type="entry name" value="WH_DNA-bd_sf"/>
</dbReference>
<dbReference type="NCBIfam" id="NF002946">
    <property type="entry name" value="PRK03601.1"/>
    <property type="match status" value="1"/>
</dbReference>
<dbReference type="PANTHER" id="PTHR30579:SF8">
    <property type="entry name" value="HTH-TYPE TRANSCRIPTIONAL REGULATOR HDFR"/>
    <property type="match status" value="1"/>
</dbReference>
<dbReference type="PANTHER" id="PTHR30579">
    <property type="entry name" value="TRANSCRIPTIONAL REGULATOR"/>
    <property type="match status" value="1"/>
</dbReference>
<dbReference type="Pfam" id="PF00126">
    <property type="entry name" value="HTH_1"/>
    <property type="match status" value="1"/>
</dbReference>
<dbReference type="Pfam" id="PF03466">
    <property type="entry name" value="LysR_substrate"/>
    <property type="match status" value="1"/>
</dbReference>
<dbReference type="PRINTS" id="PR00039">
    <property type="entry name" value="HTHLYSR"/>
</dbReference>
<dbReference type="SUPFAM" id="SSF53850">
    <property type="entry name" value="Periplasmic binding protein-like II"/>
    <property type="match status" value="1"/>
</dbReference>
<dbReference type="SUPFAM" id="SSF46785">
    <property type="entry name" value="Winged helix' DNA-binding domain"/>
    <property type="match status" value="1"/>
</dbReference>
<dbReference type="PROSITE" id="PS50931">
    <property type="entry name" value="HTH_LYSR"/>
    <property type="match status" value="1"/>
</dbReference>
<accession>B5FN59</accession>
<protein>
    <recommendedName>
        <fullName evidence="1">HTH-type transcriptional regulator HdfR</fullName>
    </recommendedName>
    <alternativeName>
        <fullName evidence="1">H-NS-dependent flhDC regulator</fullName>
    </alternativeName>
</protein>
<proteinExistence type="inferred from homology"/>
<sequence length="278" mass="31631">MDTELLKTFLEVSRTRHFGRAAEALYLTQSAVSFRIRQLENQLGVNLFTRHRNNIRLTTAGEKLLPYAETLMNTWQAARKEVAHTSRHNEFSIGASASLWECMLNAWLGRLYQLQEPQSGLQFEARIAQRQSLVKQLHERQLDLLITTEAPKMDEFSSQLLGHFTLALYCSSPARKKSELNYLRLEWGPDFQQHETGLIAADKVPVLTTSSAELARQQLSALNGCSWLPVNWANEKGGLHTVADSATLSRPLYAIWLQNSDRYSLICDLLKTDVLDEQ</sequence>
<gene>
    <name evidence="1" type="primary">hdfR</name>
    <name type="ordered locus">SeD_A4288</name>
</gene>
<keyword id="KW-0238">DNA-binding</keyword>
<keyword id="KW-0678">Repressor</keyword>
<keyword id="KW-0804">Transcription</keyword>
<keyword id="KW-0805">Transcription regulation</keyword>
<evidence type="ECO:0000255" key="1">
    <source>
        <dbReference type="HAMAP-Rule" id="MF_01233"/>
    </source>
</evidence>
<evidence type="ECO:0000305" key="2"/>
<organism>
    <name type="scientific">Salmonella dublin (strain CT_02021853)</name>
    <dbReference type="NCBI Taxonomy" id="439851"/>
    <lineage>
        <taxon>Bacteria</taxon>
        <taxon>Pseudomonadati</taxon>
        <taxon>Pseudomonadota</taxon>
        <taxon>Gammaproteobacteria</taxon>
        <taxon>Enterobacterales</taxon>
        <taxon>Enterobacteriaceae</taxon>
        <taxon>Salmonella</taxon>
    </lineage>
</organism>
<feature type="chain" id="PRO_1000139672" description="HTH-type transcriptional regulator HdfR">
    <location>
        <begin position="1"/>
        <end position="278"/>
    </location>
</feature>
<feature type="domain" description="HTH lysR-type" evidence="1">
    <location>
        <begin position="1"/>
        <end position="58"/>
    </location>
</feature>
<feature type="DNA-binding region" description="H-T-H motif" evidence="1">
    <location>
        <begin position="18"/>
        <end position="37"/>
    </location>
</feature>
<name>HDFR_SALDC</name>